<keyword id="KW-0963">Cytoplasm</keyword>
<keyword id="KW-0539">Nucleus</keyword>
<keyword id="KW-0653">Protein transport</keyword>
<keyword id="KW-1185">Reference proteome</keyword>
<keyword id="KW-0677">Repeat</keyword>
<keyword id="KW-0813">Transport</keyword>
<dbReference type="EMBL" id="AP008210">
    <property type="protein sequence ID" value="BAF16273.2"/>
    <property type="status" value="ALT_SEQ"/>
    <property type="molecule type" value="Genomic_DNA"/>
</dbReference>
<dbReference type="EMBL" id="AP014960">
    <property type="status" value="NOT_ANNOTATED_CDS"/>
    <property type="molecule type" value="Genomic_DNA"/>
</dbReference>
<dbReference type="EMBL" id="CM000141">
    <property type="protein sequence ID" value="EEE61964.1"/>
    <property type="status" value="ALT_SEQ"/>
    <property type="molecule type" value="Genomic_DNA"/>
</dbReference>
<dbReference type="RefSeq" id="XP_015636189.1">
    <property type="nucleotide sequence ID" value="XM_015780703.1"/>
</dbReference>
<dbReference type="SMR" id="B9FDR3"/>
<dbReference type="FunCoup" id="B9FDR3">
    <property type="interactions" value="3737"/>
</dbReference>
<dbReference type="STRING" id="39947.B9FDR3"/>
<dbReference type="iPTMnet" id="B9FDR3"/>
<dbReference type="PaxDb" id="39947-B9FDR3"/>
<dbReference type="KEGG" id="dosa:Os04g0691500"/>
<dbReference type="eggNOG" id="KOG2023">
    <property type="taxonomic scope" value="Eukaryota"/>
</dbReference>
<dbReference type="HOGENOM" id="CLU_008136_1_0_1"/>
<dbReference type="InParanoid" id="B9FDR3"/>
<dbReference type="OrthoDB" id="951172at2759"/>
<dbReference type="Proteomes" id="UP000000763">
    <property type="component" value="Chromosome 4"/>
</dbReference>
<dbReference type="Proteomes" id="UP000007752">
    <property type="component" value="Chromosome 4"/>
</dbReference>
<dbReference type="Proteomes" id="UP000059680">
    <property type="component" value="Chromosome 4"/>
</dbReference>
<dbReference type="GO" id="GO:0005737">
    <property type="term" value="C:cytoplasm"/>
    <property type="evidence" value="ECO:0000318"/>
    <property type="project" value="GO_Central"/>
</dbReference>
<dbReference type="GO" id="GO:0005654">
    <property type="term" value="C:nucleoplasm"/>
    <property type="evidence" value="ECO:0007669"/>
    <property type="project" value="UniProtKB-SubCell"/>
</dbReference>
<dbReference type="GO" id="GO:0005634">
    <property type="term" value="C:nucleus"/>
    <property type="evidence" value="ECO:0000318"/>
    <property type="project" value="GO_Central"/>
</dbReference>
<dbReference type="GO" id="GO:0061608">
    <property type="term" value="F:nuclear import signal receptor activity"/>
    <property type="evidence" value="ECO:0000318"/>
    <property type="project" value="GO_Central"/>
</dbReference>
<dbReference type="GO" id="GO:0008139">
    <property type="term" value="F:nuclear localization sequence binding"/>
    <property type="evidence" value="ECO:0000318"/>
    <property type="project" value="GO_Central"/>
</dbReference>
<dbReference type="GO" id="GO:0031267">
    <property type="term" value="F:small GTPase binding"/>
    <property type="evidence" value="ECO:0007669"/>
    <property type="project" value="InterPro"/>
</dbReference>
<dbReference type="GO" id="GO:0006606">
    <property type="term" value="P:protein import into nucleus"/>
    <property type="evidence" value="ECO:0000318"/>
    <property type="project" value="GO_Central"/>
</dbReference>
<dbReference type="FunFam" id="1.25.10.10:FF:000206">
    <property type="entry name" value="Transportin-1"/>
    <property type="match status" value="1"/>
</dbReference>
<dbReference type="Gene3D" id="1.25.10.10">
    <property type="entry name" value="Leucine-rich Repeat Variant"/>
    <property type="match status" value="1"/>
</dbReference>
<dbReference type="InterPro" id="IPR011989">
    <property type="entry name" value="ARM-like"/>
</dbReference>
<dbReference type="InterPro" id="IPR016024">
    <property type="entry name" value="ARM-type_fold"/>
</dbReference>
<dbReference type="InterPro" id="IPR000357">
    <property type="entry name" value="HEAT"/>
</dbReference>
<dbReference type="InterPro" id="IPR001494">
    <property type="entry name" value="Importin-beta_N"/>
</dbReference>
<dbReference type="InterPro" id="IPR040122">
    <property type="entry name" value="Importin_beta"/>
</dbReference>
<dbReference type="PANTHER" id="PTHR10527">
    <property type="entry name" value="IMPORTIN BETA"/>
    <property type="match status" value="1"/>
</dbReference>
<dbReference type="Pfam" id="PF02985">
    <property type="entry name" value="HEAT"/>
    <property type="match status" value="1"/>
</dbReference>
<dbReference type="Pfam" id="PF13513">
    <property type="entry name" value="HEAT_EZ"/>
    <property type="match status" value="1"/>
</dbReference>
<dbReference type="Pfam" id="PF03810">
    <property type="entry name" value="IBN_N"/>
    <property type="match status" value="1"/>
</dbReference>
<dbReference type="SMART" id="SM00913">
    <property type="entry name" value="IBN_N"/>
    <property type="match status" value="1"/>
</dbReference>
<dbReference type="SUPFAM" id="SSF48371">
    <property type="entry name" value="ARM repeat"/>
    <property type="match status" value="1"/>
</dbReference>
<dbReference type="PROSITE" id="PS50166">
    <property type="entry name" value="IMPORTIN_B_NT"/>
    <property type="match status" value="1"/>
</dbReference>
<accession>B9FDR3</accession>
<accession>Q0J8R4</accession>
<protein>
    <recommendedName>
        <fullName>Transportin-1</fullName>
        <shortName>OsTRN1</shortName>
    </recommendedName>
    <alternativeName>
        <fullName>Importin beta-2</fullName>
    </alternativeName>
    <alternativeName>
        <fullName>Karyopherin beta-2</fullName>
    </alternativeName>
</protein>
<gene>
    <name type="primary">TRN1</name>
    <name type="ordered locus">Os04g0691500</name>
    <name type="ordered locus">LOC_Os04g59494</name>
    <name type="ORF">OsJ_16737</name>
</gene>
<feature type="chain" id="PRO_0000421802" description="Transportin-1">
    <location>
        <begin position="1"/>
        <end position="891"/>
    </location>
</feature>
<feature type="repeat" description="HEAT 1" evidence="2">
    <location>
        <begin position="14"/>
        <end position="40"/>
    </location>
</feature>
<feature type="domain" description="Importin N-terminal" evidence="3">
    <location>
        <begin position="35"/>
        <end position="103"/>
    </location>
</feature>
<feature type="repeat" description="HEAT 2" evidence="2">
    <location>
        <begin position="45"/>
        <end position="83"/>
    </location>
</feature>
<feature type="repeat" description="HEAT 3" evidence="2">
    <location>
        <begin position="92"/>
        <end position="125"/>
    </location>
</feature>
<feature type="repeat" description="HEAT 4" evidence="2">
    <location>
        <begin position="131"/>
        <end position="168"/>
    </location>
</feature>
<feature type="repeat" description="HEAT 5" evidence="2">
    <location>
        <begin position="178"/>
        <end position="208"/>
    </location>
</feature>
<feature type="repeat" description="HEAT 6" evidence="2">
    <location>
        <begin position="221"/>
        <end position="248"/>
    </location>
</feature>
<feature type="repeat" description="HEAT 7" evidence="2">
    <location>
        <begin position="260"/>
        <end position="287"/>
    </location>
</feature>
<feature type="repeat" description="HEAT 8" evidence="2">
    <location>
        <begin position="303"/>
        <end position="381"/>
    </location>
</feature>
<feature type="repeat" description="HEAT 9" evidence="2">
    <location>
        <begin position="389"/>
        <end position="420"/>
    </location>
</feature>
<feature type="repeat" description="HEAT 10" evidence="2">
    <location>
        <begin position="432"/>
        <end position="459"/>
    </location>
</feature>
<feature type="repeat" description="HEAT 11" evidence="2">
    <location>
        <begin position="477"/>
        <end position="510"/>
    </location>
</feature>
<feature type="repeat" description="HEAT 12" evidence="2">
    <location>
        <begin position="518"/>
        <end position="551"/>
    </location>
</feature>
<feature type="repeat" description="HEAT 13" evidence="2">
    <location>
        <begin position="559"/>
        <end position="597"/>
    </location>
</feature>
<feature type="repeat" description="HEAT 14" evidence="2">
    <location>
        <begin position="605"/>
        <end position="653"/>
    </location>
</feature>
<feature type="repeat" description="HEAT 15" evidence="2">
    <location>
        <begin position="664"/>
        <end position="695"/>
    </location>
</feature>
<feature type="repeat" description="HEAT 16" evidence="2">
    <location>
        <begin position="703"/>
        <end position="740"/>
    </location>
</feature>
<feature type="repeat" description="HEAT 17" evidence="2">
    <location>
        <begin position="748"/>
        <end position="784"/>
    </location>
</feature>
<feature type="repeat" description="HEAT 18" evidence="2">
    <location>
        <begin position="792"/>
        <end position="825"/>
    </location>
</feature>
<feature type="repeat" description="HEAT 19" evidence="2">
    <location>
        <begin position="834"/>
        <end position="866"/>
    </location>
</feature>
<feature type="region of interest" description="Disordered" evidence="4">
    <location>
        <begin position="317"/>
        <end position="337"/>
    </location>
</feature>
<feature type="compositionally biased region" description="Acidic residues" evidence="4">
    <location>
        <begin position="317"/>
        <end position="330"/>
    </location>
</feature>
<feature type="sequence conflict" description="In Ref. 4; EEE61964." evidence="5" ref="4">
    <original>V</original>
    <variation>L</variation>
    <location>
        <position position="125"/>
    </location>
</feature>
<proteinExistence type="inferred from homology"/>
<sequence length="891" mass="98661">MAAAAALWQPQEEGLREICTLLDAHISPNSDQARIWQQLQHYSQFPDFNNYLVFLLARGEGKSFEARQAAGLLLKNNLRATFSSMPPASQQYVKSELLPCIGATNKAIRSTVGTVISVLFQIVRVAGWIELFQALHQCLDSNDLDHMEGAMDAIYKICEDVPEELDVDVPGLPERPINVFMPRLLQFFQSTHAILRKLALGCINQYIVVMPAALYMSMDQYLQGLFNLAKDPSADVRKLVCSAWVQLIEVRPSILEPHLKNVTELMLQANKDSDDEVALEACEFWSAYCDVSMPPEGLREFLPRLIPTLLSNMSYSDDDESLADAEEDESFPDRDQDLKPRFHASRLHGSETGEDDDDDDAVNVWNLRKCSAAGLDVLSNVFGDDILPTLMPLIQQNLARTDDDAWKEREAAVLSIGAIAEGCITGLYPHLPQIVAFLIPLLDDKFPLIRSITCWTLSRYSKFIVQSLEHPNGREQFDKILLGLLRRVLDTNKRVQEAACSAFATLEEEAAEELVPHLGIILQHLMCAYGKYQRRNLRILYDALGTLADAVGAELNQAKYLDIFMPPLITKWQQLANSDKDLFPLLECFTSIAQALGPGFSQFAEPVFQRCINLIQSQHLAKVDPAAAGALYDKEFIVCALDLLSGLAEGLGAGIESLVSQSSLRDILLQCCMDEAADVRQSALALLGDLSRVCPIHLHPRLQEFLNVAAKQLNPQCVKEAVSVANNACWAIGELAIKIGKEISPVVITVVSCLVPILKSPEGLNKSLLENSAITLGRLCWVCPDIVAPHMDHFMQAWCNALCMIRDDFEKEDAFHGLCAMVAANPTGAVGSLTFICQACASWNEIKSEGLHNEVCQILNGYKQMLGSGGWEQCMSTLEPAVVQRLGRYGV</sequence>
<name>TNPO1_ORYSJ</name>
<evidence type="ECO:0000250" key="1"/>
<evidence type="ECO:0000250" key="2">
    <source>
        <dbReference type="UniProtKB" id="Q92973"/>
    </source>
</evidence>
<evidence type="ECO:0000255" key="3">
    <source>
        <dbReference type="PROSITE-ProRule" id="PRU00115"/>
    </source>
</evidence>
<evidence type="ECO:0000256" key="4">
    <source>
        <dbReference type="SAM" id="MobiDB-lite"/>
    </source>
</evidence>
<evidence type="ECO:0000305" key="5"/>
<reference key="1">
    <citation type="journal article" date="2005" name="Nature">
        <title>The map-based sequence of the rice genome.</title>
        <authorList>
            <consortium name="International rice genome sequencing project (IRGSP)"/>
        </authorList>
    </citation>
    <scope>NUCLEOTIDE SEQUENCE [LARGE SCALE GENOMIC DNA]</scope>
    <source>
        <strain>cv. Nipponbare</strain>
    </source>
</reference>
<reference key="2">
    <citation type="journal article" date="2008" name="Nucleic Acids Res.">
        <title>The rice annotation project database (RAP-DB): 2008 update.</title>
        <authorList>
            <consortium name="The rice annotation project (RAP)"/>
        </authorList>
    </citation>
    <scope>GENOME REANNOTATION</scope>
    <source>
        <strain>cv. Nipponbare</strain>
    </source>
</reference>
<reference key="3">
    <citation type="journal article" date="2013" name="Rice">
        <title>Improvement of the Oryza sativa Nipponbare reference genome using next generation sequence and optical map data.</title>
        <authorList>
            <person name="Kawahara Y."/>
            <person name="de la Bastide M."/>
            <person name="Hamilton J.P."/>
            <person name="Kanamori H."/>
            <person name="McCombie W.R."/>
            <person name="Ouyang S."/>
            <person name="Schwartz D.C."/>
            <person name="Tanaka T."/>
            <person name="Wu J."/>
            <person name="Zhou S."/>
            <person name="Childs K.L."/>
            <person name="Davidson R.M."/>
            <person name="Lin H."/>
            <person name="Quesada-Ocampo L."/>
            <person name="Vaillancourt B."/>
            <person name="Sakai H."/>
            <person name="Lee S.S."/>
            <person name="Kim J."/>
            <person name="Numa H."/>
            <person name="Itoh T."/>
            <person name="Buell C.R."/>
            <person name="Matsumoto T."/>
        </authorList>
    </citation>
    <scope>GENOME REANNOTATION</scope>
    <source>
        <strain>cv. Nipponbare</strain>
    </source>
</reference>
<reference key="4">
    <citation type="journal article" date="2005" name="PLoS Biol.">
        <title>The genomes of Oryza sativa: a history of duplications.</title>
        <authorList>
            <person name="Yu J."/>
            <person name="Wang J."/>
            <person name="Lin W."/>
            <person name="Li S."/>
            <person name="Li H."/>
            <person name="Zhou J."/>
            <person name="Ni P."/>
            <person name="Dong W."/>
            <person name="Hu S."/>
            <person name="Zeng C."/>
            <person name="Zhang J."/>
            <person name="Zhang Y."/>
            <person name="Li R."/>
            <person name="Xu Z."/>
            <person name="Li S."/>
            <person name="Li X."/>
            <person name="Zheng H."/>
            <person name="Cong L."/>
            <person name="Lin L."/>
            <person name="Yin J."/>
            <person name="Geng J."/>
            <person name="Li G."/>
            <person name="Shi J."/>
            <person name="Liu J."/>
            <person name="Lv H."/>
            <person name="Li J."/>
            <person name="Wang J."/>
            <person name="Deng Y."/>
            <person name="Ran L."/>
            <person name="Shi X."/>
            <person name="Wang X."/>
            <person name="Wu Q."/>
            <person name="Li C."/>
            <person name="Ren X."/>
            <person name="Wang J."/>
            <person name="Wang X."/>
            <person name="Li D."/>
            <person name="Liu D."/>
            <person name="Zhang X."/>
            <person name="Ji Z."/>
            <person name="Zhao W."/>
            <person name="Sun Y."/>
            <person name="Zhang Z."/>
            <person name="Bao J."/>
            <person name="Han Y."/>
            <person name="Dong L."/>
            <person name="Ji J."/>
            <person name="Chen P."/>
            <person name="Wu S."/>
            <person name="Liu J."/>
            <person name="Xiao Y."/>
            <person name="Bu D."/>
            <person name="Tan J."/>
            <person name="Yang L."/>
            <person name="Ye C."/>
            <person name="Zhang J."/>
            <person name="Xu J."/>
            <person name="Zhou Y."/>
            <person name="Yu Y."/>
            <person name="Zhang B."/>
            <person name="Zhuang S."/>
            <person name="Wei H."/>
            <person name="Liu B."/>
            <person name="Lei M."/>
            <person name="Yu H."/>
            <person name="Li Y."/>
            <person name="Xu H."/>
            <person name="Wei S."/>
            <person name="He X."/>
            <person name="Fang L."/>
            <person name="Zhang Z."/>
            <person name="Zhang Y."/>
            <person name="Huang X."/>
            <person name="Su Z."/>
            <person name="Tong W."/>
            <person name="Li J."/>
            <person name="Tong Z."/>
            <person name="Li S."/>
            <person name="Ye J."/>
            <person name="Wang L."/>
            <person name="Fang L."/>
            <person name="Lei T."/>
            <person name="Chen C.-S."/>
            <person name="Chen H.-C."/>
            <person name="Xu Z."/>
            <person name="Li H."/>
            <person name="Huang H."/>
            <person name="Zhang F."/>
            <person name="Xu H."/>
            <person name="Li N."/>
            <person name="Zhao C."/>
            <person name="Li S."/>
            <person name="Dong L."/>
            <person name="Huang Y."/>
            <person name="Li L."/>
            <person name="Xi Y."/>
            <person name="Qi Q."/>
            <person name="Li W."/>
            <person name="Zhang B."/>
            <person name="Hu W."/>
            <person name="Zhang Y."/>
            <person name="Tian X."/>
            <person name="Jiao Y."/>
            <person name="Liang X."/>
            <person name="Jin J."/>
            <person name="Gao L."/>
            <person name="Zheng W."/>
            <person name="Hao B."/>
            <person name="Liu S.-M."/>
            <person name="Wang W."/>
            <person name="Yuan L."/>
            <person name="Cao M."/>
            <person name="McDermott J."/>
            <person name="Samudrala R."/>
            <person name="Wang J."/>
            <person name="Wong G.K.-S."/>
            <person name="Yang H."/>
        </authorList>
    </citation>
    <scope>NUCLEOTIDE SEQUENCE [LARGE SCALE GENOMIC DNA] OF 4-891</scope>
    <source>
        <strain>cv. Nipponbare</strain>
    </source>
</reference>
<reference key="5">
    <citation type="journal article" date="2011" name="PLoS ONE">
        <title>Evolution of the karyopherin-? family of nucleocytoplasmic transport factors; ancient origins and continued specialization.</title>
        <authorList>
            <person name="O'Reilly A.J."/>
            <person name="Dacks J.B."/>
            <person name="Field M.C."/>
        </authorList>
    </citation>
    <scope>GENE FAMILY</scope>
</reference>
<organism>
    <name type="scientific">Oryza sativa subsp. japonica</name>
    <name type="common">Rice</name>
    <dbReference type="NCBI Taxonomy" id="39947"/>
    <lineage>
        <taxon>Eukaryota</taxon>
        <taxon>Viridiplantae</taxon>
        <taxon>Streptophyta</taxon>
        <taxon>Embryophyta</taxon>
        <taxon>Tracheophyta</taxon>
        <taxon>Spermatophyta</taxon>
        <taxon>Magnoliopsida</taxon>
        <taxon>Liliopsida</taxon>
        <taxon>Poales</taxon>
        <taxon>Poaceae</taxon>
        <taxon>BOP clade</taxon>
        <taxon>Oryzoideae</taxon>
        <taxon>Oryzeae</taxon>
        <taxon>Oryzinae</taxon>
        <taxon>Oryza</taxon>
        <taxon>Oryza sativa</taxon>
    </lineage>
</organism>
<comment type="function">
    <text evidence="1">Functions in nuclear protein import as nuclear transport receptor. Serves as receptor for nuclear localization signals (NLS) in cargo substrates. Is thought to mediate docking of the importin/substrate complex to the nuclear pore complex (NPC) through binding to nucleoporin and the complex is subsequently translocated through the pore by an energy requiring, Ran-dependent mechanism. At the nucleoplasmic side of the NPC, Ran binds to the importin, the importin/substrate complex dissociates and importin is re-exported from the nucleus to the cytoplasm where GTP hydrolysis releases Ran. The directionality of nuclear import is thought to be conferred by an asymmetric distribution of the GTP- and GDP-bound forms of Ran between the cytoplasm and nucleus (By similarity).</text>
</comment>
<comment type="subcellular location">
    <subcellularLocation>
        <location evidence="1">Cytoplasm</location>
    </subcellularLocation>
    <subcellularLocation>
        <location evidence="1">Nucleus</location>
        <location evidence="1">Nucleoplasm</location>
    </subcellularLocation>
    <text evidence="1">Shuttles continuously between the nucleus and the cytoplasm.</text>
</comment>
<comment type="similarity">
    <text evidence="5">Belongs to the importin beta family. Importin beta-2 subfamily.</text>
</comment>
<comment type="sequence caution" evidence="5">
    <conflict type="erroneous gene model prediction">
        <sequence resource="EMBL-CDS" id="BAF16273"/>
    </conflict>
</comment>
<comment type="sequence caution" evidence="5">
    <conflict type="erroneous gene model prediction">
        <sequence resource="EMBL-CDS" id="EEE61964"/>
    </conflict>
</comment>
<comment type="sequence caution" evidence="5">
    <conflict type="frameshift">
        <sequence resource="EMBL-CDS" id="EEE61964"/>
    </conflict>
</comment>